<organism>
    <name type="scientific">Caenorhabditis elegans</name>
    <dbReference type="NCBI Taxonomy" id="6239"/>
    <lineage>
        <taxon>Eukaryota</taxon>
        <taxon>Metazoa</taxon>
        <taxon>Ecdysozoa</taxon>
        <taxon>Nematoda</taxon>
        <taxon>Chromadorea</taxon>
        <taxon>Rhabditida</taxon>
        <taxon>Rhabditina</taxon>
        <taxon>Rhabditomorpha</taxon>
        <taxon>Rhabditoidea</taxon>
        <taxon>Rhabditidae</taxon>
        <taxon>Peloderinae</taxon>
        <taxon>Caenorhabditis</taxon>
    </lineage>
</organism>
<feature type="signal peptide" evidence="1">
    <location>
        <begin position="1"/>
        <end position="17"/>
    </location>
</feature>
<feature type="chain" id="PRO_0000412824" description="Uncharacterized protein C30A5.10">
    <location>
        <begin position="18"/>
        <end position="988"/>
    </location>
</feature>
<feature type="transmembrane region" description="Helical" evidence="1">
    <location>
        <begin position="690"/>
        <end position="710"/>
    </location>
</feature>
<feature type="transmembrane region" description="Helical" evidence="1">
    <location>
        <begin position="721"/>
        <end position="741"/>
    </location>
</feature>
<feature type="transmembrane region" description="Helical" evidence="1">
    <location>
        <begin position="753"/>
        <end position="773"/>
    </location>
</feature>
<feature type="transmembrane region" description="Helical" evidence="1">
    <location>
        <begin position="784"/>
        <end position="804"/>
    </location>
</feature>
<feature type="transmembrane region" description="Helical" evidence="1">
    <location>
        <begin position="832"/>
        <end position="852"/>
    </location>
</feature>
<feature type="transmembrane region" description="Helical" evidence="1">
    <location>
        <begin position="864"/>
        <end position="884"/>
    </location>
</feature>
<feature type="transmembrane region" description="Helical" evidence="1">
    <location>
        <begin position="891"/>
        <end position="911"/>
    </location>
</feature>
<feature type="region of interest" description="Disordered" evidence="2">
    <location>
        <begin position="111"/>
        <end position="176"/>
    </location>
</feature>
<feature type="region of interest" description="Disordered" evidence="2">
    <location>
        <begin position="966"/>
        <end position="988"/>
    </location>
</feature>
<feature type="compositionally biased region" description="Low complexity" evidence="2">
    <location>
        <begin position="114"/>
        <end position="140"/>
    </location>
</feature>
<feature type="glycosylation site" description="N-linked (GlcNAc...) asparagine" evidence="1">
    <location>
        <position position="247"/>
    </location>
</feature>
<feature type="glycosylation site" description="N-linked (GlcNAc...) asparagine" evidence="1">
    <location>
        <position position="389"/>
    </location>
</feature>
<feature type="glycosylation site" description="N-linked (GlcNAc...) asparagine" evidence="1">
    <location>
        <position position="529"/>
    </location>
</feature>
<feature type="glycosylation site" description="N-linked (GlcNAc...) asparagine" evidence="1">
    <location>
        <position position="601"/>
    </location>
</feature>
<feature type="glycosylation site" description="N-linked (GlcNAc...) asparagine" evidence="1">
    <location>
        <position position="720"/>
    </location>
</feature>
<feature type="glycosylation site" description="N-linked (GlcNAc...) asparagine" evidence="1">
    <location>
        <position position="974"/>
    </location>
</feature>
<feature type="splice variant" id="VSP_041807" description="In isoform b." evidence="3">
    <original>I</original>
    <variation>V</variation>
    <location>
        <position position="466"/>
    </location>
</feature>
<feature type="splice variant" id="VSP_041808" description="In isoform b." evidence="3">
    <location>
        <begin position="467"/>
        <end position="988"/>
    </location>
</feature>
<reference key="1">
    <citation type="journal article" date="1994" name="Nature">
        <title>2.2 Mb of contiguous nucleotide sequence from chromosome III of C. elegans.</title>
        <authorList>
            <person name="Wilson R."/>
            <person name="Ainscough R."/>
            <person name="Anderson K."/>
            <person name="Baynes C."/>
            <person name="Berks M."/>
            <person name="Bonfield J."/>
            <person name="Burton J."/>
            <person name="Connell M."/>
            <person name="Copsey T."/>
            <person name="Cooper J."/>
            <person name="Coulson A."/>
            <person name="Craxton M."/>
            <person name="Dear S."/>
            <person name="Du Z."/>
            <person name="Durbin R."/>
            <person name="Favello A."/>
            <person name="Fraser A."/>
            <person name="Fulton L."/>
            <person name="Gardner A."/>
            <person name="Green P."/>
            <person name="Hawkins T."/>
            <person name="Hillier L."/>
            <person name="Jier M."/>
            <person name="Johnston L."/>
            <person name="Jones M."/>
            <person name="Kershaw J."/>
            <person name="Kirsten J."/>
            <person name="Laisster N."/>
            <person name="Latreille P."/>
            <person name="Lightning J."/>
            <person name="Lloyd C."/>
            <person name="Mortimore B."/>
            <person name="O'Callaghan M."/>
            <person name="Parsons J."/>
            <person name="Percy C."/>
            <person name="Rifken L."/>
            <person name="Roopra A."/>
            <person name="Saunders D."/>
            <person name="Shownkeen R."/>
            <person name="Sims M."/>
            <person name="Smaldon N."/>
            <person name="Smith A."/>
            <person name="Smith M."/>
            <person name="Sonnhammer E."/>
            <person name="Staden R."/>
            <person name="Sulston J."/>
            <person name="Thierry-Mieg J."/>
            <person name="Thomas K."/>
            <person name="Vaudin M."/>
            <person name="Vaughan K."/>
            <person name="Waterston R."/>
            <person name="Watson A."/>
            <person name="Weinstock L."/>
            <person name="Wilkinson-Sproat J."/>
            <person name="Wohldman P."/>
        </authorList>
    </citation>
    <scope>NUCLEOTIDE SEQUENCE [LARGE SCALE GENOMIC DNA]</scope>
    <scope>ALTERNATIVE SPLICING</scope>
    <source>
        <strain>Bristol N2</strain>
    </source>
</reference>
<reference key="2">
    <citation type="journal article" date="1998" name="Science">
        <title>Genome sequence of the nematode C. elegans: a platform for investigating biology.</title>
        <authorList>
            <consortium name="The C. elegans sequencing consortium"/>
        </authorList>
    </citation>
    <scope>NUCLEOTIDE SEQUENCE [LARGE SCALE GENOMIC DNA]</scope>
    <scope>ALTERNATIVE SPLICING</scope>
    <source>
        <strain>Bristol N2</strain>
    </source>
</reference>
<comment type="subcellular location">
    <subcellularLocation>
        <location evidence="3">Membrane</location>
        <topology evidence="3">Multi-pass membrane protein</topology>
    </subcellularLocation>
</comment>
<comment type="alternative products">
    <event type="alternative splicing"/>
    <isoform>
        <id>P34352-1</id>
        <name>a</name>
        <sequence type="displayed"/>
    </isoform>
    <isoform>
        <id>P34352-2</id>
        <name>b</name>
        <sequence type="described" ref="VSP_041807 VSP_041808"/>
    </isoform>
</comment>
<evidence type="ECO:0000255" key="1"/>
<evidence type="ECO:0000256" key="2">
    <source>
        <dbReference type="SAM" id="MobiDB-lite"/>
    </source>
</evidence>
<evidence type="ECO:0000305" key="3"/>
<accession>P34352</accession>
<accession>C8JQN6</accession>
<accession>Q2V4Y1</accession>
<accession>Q8TA78</accession>
<gene>
    <name type="ORF">C30A5.10</name>
</gene>
<proteinExistence type="inferred from homology"/>
<name>YK86_CAEEL</name>
<dbReference type="EMBL" id="FO080290">
    <property type="protein sequence ID" value="CCD62658.1"/>
    <property type="molecule type" value="Genomic_DNA"/>
</dbReference>
<dbReference type="EMBL" id="FO080290">
    <property type="protein sequence ID" value="CCD62657.1"/>
    <property type="molecule type" value="Genomic_DNA"/>
</dbReference>
<dbReference type="PIR" id="S44780">
    <property type="entry name" value="S44780"/>
</dbReference>
<dbReference type="RefSeq" id="NP_498793.3">
    <molecule id="P34352-1"/>
    <property type="nucleotide sequence ID" value="NM_066392.6"/>
</dbReference>
<dbReference type="RefSeq" id="NP_498794.3">
    <molecule id="P34352-2"/>
    <property type="nucleotide sequence ID" value="NM_066393.7"/>
</dbReference>
<dbReference type="SMR" id="P34352"/>
<dbReference type="BioGRID" id="533183">
    <property type="interactions" value="1"/>
</dbReference>
<dbReference type="FunCoup" id="P34352">
    <property type="interactions" value="347"/>
</dbReference>
<dbReference type="STRING" id="6239.C30A5.10a.1"/>
<dbReference type="PaxDb" id="6239-C30A5.10a"/>
<dbReference type="EnsemblMetazoa" id="C30A5.10a.1">
    <molecule id="P34352-1"/>
    <property type="protein sequence ID" value="C30A5.10a.1"/>
    <property type="gene ID" value="WBGene00016242"/>
</dbReference>
<dbReference type="EnsemblMetazoa" id="C30A5.10b.1">
    <molecule id="P34352-2"/>
    <property type="protein sequence ID" value="C30A5.10b.1"/>
    <property type="gene ID" value="WBGene00016242"/>
</dbReference>
<dbReference type="GeneID" id="3565865"/>
<dbReference type="KEGG" id="cel:CELE_C30A5.10"/>
<dbReference type="UCSC" id="C30A5.10a">
    <property type="organism name" value="c. elegans"/>
</dbReference>
<dbReference type="UCSC" id="C30A5.6">
    <molecule id="P34352-1"/>
    <property type="organism name" value="c. elegans"/>
</dbReference>
<dbReference type="AGR" id="WB:WBGene00016242"/>
<dbReference type="CTD" id="3565865"/>
<dbReference type="WormBase" id="C30A5.10a">
    <molecule id="P34352-1"/>
    <property type="protein sequence ID" value="CE46462"/>
    <property type="gene ID" value="WBGene00016242"/>
</dbReference>
<dbReference type="WormBase" id="C30A5.10b">
    <molecule id="P34352-2"/>
    <property type="protein sequence ID" value="CE46155"/>
    <property type="gene ID" value="WBGene00016242"/>
</dbReference>
<dbReference type="eggNOG" id="ENOG502SM9Y">
    <property type="taxonomic scope" value="Eukaryota"/>
</dbReference>
<dbReference type="GeneTree" id="ENSGT01030000234595"/>
<dbReference type="HOGENOM" id="CLU_011339_0_0_1"/>
<dbReference type="InParanoid" id="P34352"/>
<dbReference type="OMA" id="ALTCLMC"/>
<dbReference type="OrthoDB" id="425344at2759"/>
<dbReference type="PhylomeDB" id="P34352"/>
<dbReference type="PRO" id="PR:P34352"/>
<dbReference type="Proteomes" id="UP000001940">
    <property type="component" value="Chromosome III"/>
</dbReference>
<dbReference type="Bgee" id="WBGene00016242">
    <property type="expression patterns" value="Expressed in pharyngeal muscle cell (C elegans) and 2 other cell types or tissues"/>
</dbReference>
<dbReference type="GO" id="GO:0005886">
    <property type="term" value="C:plasma membrane"/>
    <property type="evidence" value="ECO:0000318"/>
    <property type="project" value="GO_Central"/>
</dbReference>
<dbReference type="GO" id="GO:0001641">
    <property type="term" value="F:group II metabotropic glutamate receptor activity"/>
    <property type="evidence" value="ECO:0000318"/>
    <property type="project" value="GO_Central"/>
</dbReference>
<dbReference type="GO" id="GO:0007216">
    <property type="term" value="P:G protein-coupled glutamate receptor signaling pathway"/>
    <property type="evidence" value="ECO:0000318"/>
    <property type="project" value="GO_Central"/>
</dbReference>
<dbReference type="GO" id="GO:0051966">
    <property type="term" value="P:regulation of synaptic transmission, glutamatergic"/>
    <property type="evidence" value="ECO:0000318"/>
    <property type="project" value="GO_Central"/>
</dbReference>
<dbReference type="Gene3D" id="3.40.50.2300">
    <property type="match status" value="2"/>
</dbReference>
<dbReference type="InterPro" id="IPR001828">
    <property type="entry name" value="ANF_lig-bd_rcpt"/>
</dbReference>
<dbReference type="InterPro" id="IPR017978">
    <property type="entry name" value="GPCR_3_C"/>
</dbReference>
<dbReference type="InterPro" id="IPR050726">
    <property type="entry name" value="mGluR"/>
</dbReference>
<dbReference type="InterPro" id="IPR028082">
    <property type="entry name" value="Peripla_BP_I"/>
</dbReference>
<dbReference type="PANTHER" id="PTHR24060">
    <property type="entry name" value="METABOTROPIC GLUTAMATE RECEPTOR"/>
    <property type="match status" value="1"/>
</dbReference>
<dbReference type="Pfam" id="PF00003">
    <property type="entry name" value="7tm_3"/>
    <property type="match status" value="1"/>
</dbReference>
<dbReference type="Pfam" id="PF01094">
    <property type="entry name" value="ANF_receptor"/>
    <property type="match status" value="1"/>
</dbReference>
<dbReference type="SUPFAM" id="SSF53822">
    <property type="entry name" value="Periplasmic binding protein-like I"/>
    <property type="match status" value="1"/>
</dbReference>
<dbReference type="PROSITE" id="PS50259">
    <property type="entry name" value="G_PROTEIN_RECEP_F3_4"/>
    <property type="match status" value="1"/>
</dbReference>
<protein>
    <recommendedName>
        <fullName>Uncharacterized protein C30A5.10</fullName>
    </recommendedName>
</protein>
<keyword id="KW-0025">Alternative splicing</keyword>
<keyword id="KW-0325">Glycoprotein</keyword>
<keyword id="KW-0472">Membrane</keyword>
<keyword id="KW-1185">Reference proteome</keyword>
<keyword id="KW-0732">Signal</keyword>
<keyword id="KW-0812">Transmembrane</keyword>
<keyword id="KW-1133">Transmembrane helix</keyword>
<sequence length="988" mass="109305">MIRLVFLFLLVVLSVELLDFRSNNYRQIINNALPTIDPQMISQAQAAINPYTDIFVNPPNSFVDFPMANIASSGAFWQQPQSTVSQVAWNPPVSTNPSSSPAASTISFQSYQNPSTFPSTTTASTTTSTTTMPPTYQTTTKSVKKNTETLWTTSKSPMKLSKNPKPSKLNQKSSKSSATSFDSAQLSVLSHRLLNDVLIIPSSRRLYILAIIPIHQSSGQQNFECGEIDVNAIVRMAAFLEAQKTINESNLLKEIGVDIGAIIVDSCSTDLRSVADLYELLSGTNIQKSDLIAIIRDDSTFMPNTEQIIRQLNLPVVNTFFTTRSAVQTSGTLPSMFLPIQSIISALRHYQSTCVNIIFDEKYSESVSEFQQVALTEGICVEVAIHVKNASSTVSEMVVRRLLLSEARIVVALLSEDTWIQMTKALRSEMVIAGRFVFISMQDQRWTTSRKFIESWPTFEQHLISITPKTPINHEEEIKKLTENIPKLSLPNLWLKQFWSSAFKCHVDNEDMGGSNSFSRECATTQSLNISQVAPDVDVASISLATHAIGIAFRSFVDRVCPGALVISLSDCVNDPFVGFHQSILDSDFVHHLSDIPVSFNYSTGFRDISLRINRVQFVEDRLQFSELGIVDPIQFTYQDSSDTATPSARGSYLLMSSTCPKSTCAKELAKSTIKQQLPSIVKALTDLEIMIFTIFSVLSALTCLMCMYLKVISVSEYRNLTAVTFLGLAFLSISAPAFIIPPNSISCSLRKLLFPIAISITIAPVFVKTVLIWKSIGSSSSSVLIAFCIVLIQTVISTEWLLLASDSATEFVSTLHGTMWRCSPGDSSEEMILLSCSLIALLSLLSFIFALATLKHSQSLQHLMISILAILFETALYVSLPLIPYKTRDTVMATTILIFAFVALLLSHTGKSSAKKESECGGTLQKTNENWLQHVVQSPQDQMTLVKNYHTASTHAQSTMQFEKRSEDTLRRNTSLYGTEGYELPTP</sequence>